<reference key="1">
    <citation type="journal article" date="2000" name="Nature">
        <title>Complete DNA sequence of a serogroup A strain of Neisseria meningitidis Z2491.</title>
        <authorList>
            <person name="Parkhill J."/>
            <person name="Achtman M."/>
            <person name="James K.D."/>
            <person name="Bentley S.D."/>
            <person name="Churcher C.M."/>
            <person name="Klee S.R."/>
            <person name="Morelli G."/>
            <person name="Basham D."/>
            <person name="Brown D."/>
            <person name="Chillingworth T."/>
            <person name="Davies R.M."/>
            <person name="Davis P."/>
            <person name="Devlin K."/>
            <person name="Feltwell T."/>
            <person name="Hamlin N."/>
            <person name="Holroyd S."/>
            <person name="Jagels K."/>
            <person name="Leather S."/>
            <person name="Moule S."/>
            <person name="Mungall K.L."/>
            <person name="Quail M.A."/>
            <person name="Rajandream M.A."/>
            <person name="Rutherford K.M."/>
            <person name="Simmonds M."/>
            <person name="Skelton J."/>
            <person name="Whitehead S."/>
            <person name="Spratt B.G."/>
            <person name="Barrell B.G."/>
        </authorList>
    </citation>
    <scope>NUCLEOTIDE SEQUENCE [LARGE SCALE GENOMIC DNA]</scope>
    <source>
        <strain>DSM 15465 / Z2491</strain>
    </source>
</reference>
<gene>
    <name evidence="1" type="primary">prmB</name>
    <name type="ordered locus">NMA1912</name>
</gene>
<protein>
    <recommendedName>
        <fullName evidence="1">Ribosomal protein uL3 glutamine methyltransferase</fullName>
        <shortName evidence="1">uL3 MTase</shortName>
        <ecNumber evidence="1">2.1.1.298</ecNumber>
    </recommendedName>
    <alternativeName>
        <fullName evidence="1">N5-glutamine methyltransferase PrmB</fullName>
    </alternativeName>
</protein>
<comment type="function">
    <text evidence="1">Methylates large ribosomal subunit protein uL3 on a specific glutamine residue.</text>
</comment>
<comment type="catalytic activity">
    <reaction evidence="1">
        <text>L-glutaminyl-[ribosomal protein uL3] + S-adenosyl-L-methionine = N(5)-methyl-L-glutaminyl-[ribosomal protein uL3] + S-adenosyl-L-homocysteine + H(+)</text>
        <dbReference type="Rhea" id="RHEA:45020"/>
        <dbReference type="Rhea" id="RHEA-COMP:11063"/>
        <dbReference type="Rhea" id="RHEA-COMP:11064"/>
        <dbReference type="ChEBI" id="CHEBI:15378"/>
        <dbReference type="ChEBI" id="CHEBI:30011"/>
        <dbReference type="ChEBI" id="CHEBI:57856"/>
        <dbReference type="ChEBI" id="CHEBI:59789"/>
        <dbReference type="ChEBI" id="CHEBI:61891"/>
        <dbReference type="EC" id="2.1.1.298"/>
    </reaction>
</comment>
<comment type="similarity">
    <text evidence="1">Belongs to the protein N5-glutamine methyltransferase family. PrmB subfamily.</text>
</comment>
<sequence length="303" mass="33971">MVHIMFNQAAQELTTIRDVLRFAVSRFNEAGLFFGHGTDNAHDEAAYLILHTLNLPLDMLAPYLDAKLLEAEKEEVLTVIERRAVEHIPAAYLTHQAWQGEFDFYVDERVIIPRSFIYELLGDGLRPWIEYDELVHNALDLCTGSGCLAIQMAHHYPDAQIDAVDVSLDALEVAGINVEDYGLEERIRLIHTDLFEGLEGTYDLIVSNPPYVDAESVELLPEEYLHEPELALGSGADGLDATRQILLNAAKFLNPKGVLLVEIGHNRDVLEAAYPELPFTWLETSGGDGFVFLLTREQLLGEE</sequence>
<accession>Q9JTA1</accession>
<accession>A1ITB4</accession>
<keyword id="KW-0489">Methyltransferase</keyword>
<keyword id="KW-0949">S-adenosyl-L-methionine</keyword>
<keyword id="KW-0808">Transferase</keyword>
<evidence type="ECO:0000255" key="1">
    <source>
        <dbReference type="HAMAP-Rule" id="MF_02125"/>
    </source>
</evidence>
<name>PRMB_NEIMA</name>
<proteinExistence type="inferred from homology"/>
<organism>
    <name type="scientific">Neisseria meningitidis serogroup A / serotype 4A (strain DSM 15465 / Z2491)</name>
    <dbReference type="NCBI Taxonomy" id="122587"/>
    <lineage>
        <taxon>Bacteria</taxon>
        <taxon>Pseudomonadati</taxon>
        <taxon>Pseudomonadota</taxon>
        <taxon>Betaproteobacteria</taxon>
        <taxon>Neisseriales</taxon>
        <taxon>Neisseriaceae</taxon>
        <taxon>Neisseria</taxon>
    </lineage>
</organism>
<dbReference type="EC" id="2.1.1.298" evidence="1"/>
<dbReference type="EMBL" id="AL157959">
    <property type="protein sequence ID" value="CAM09027.1"/>
    <property type="molecule type" value="Genomic_DNA"/>
</dbReference>
<dbReference type="PIR" id="H81818">
    <property type="entry name" value="H81818"/>
</dbReference>
<dbReference type="SMR" id="Q9JTA1"/>
<dbReference type="EnsemblBacteria" id="CAM09027">
    <property type="protein sequence ID" value="CAM09027"/>
    <property type="gene ID" value="NMA1912"/>
</dbReference>
<dbReference type="KEGG" id="nma:NMA1912"/>
<dbReference type="HOGENOM" id="CLU_018398_5_1_4"/>
<dbReference type="Proteomes" id="UP000000626">
    <property type="component" value="Chromosome"/>
</dbReference>
<dbReference type="GO" id="GO:0005829">
    <property type="term" value="C:cytosol"/>
    <property type="evidence" value="ECO:0007669"/>
    <property type="project" value="TreeGrafter"/>
</dbReference>
<dbReference type="GO" id="GO:0003676">
    <property type="term" value="F:nucleic acid binding"/>
    <property type="evidence" value="ECO:0007669"/>
    <property type="project" value="InterPro"/>
</dbReference>
<dbReference type="GO" id="GO:0036009">
    <property type="term" value="F:protein-glutamine N-methyltransferase activity"/>
    <property type="evidence" value="ECO:0007669"/>
    <property type="project" value="UniProtKB-UniRule"/>
</dbReference>
<dbReference type="GO" id="GO:0032259">
    <property type="term" value="P:methylation"/>
    <property type="evidence" value="ECO:0007669"/>
    <property type="project" value="UniProtKB-KW"/>
</dbReference>
<dbReference type="CDD" id="cd02440">
    <property type="entry name" value="AdoMet_MTases"/>
    <property type="match status" value="1"/>
</dbReference>
<dbReference type="FunFam" id="3.40.50.150:FF:000042">
    <property type="entry name" value="50S ribosomal protein L3 glutamine methyltransferase"/>
    <property type="match status" value="1"/>
</dbReference>
<dbReference type="Gene3D" id="1.10.8.10">
    <property type="entry name" value="DNA helicase RuvA subunit, C-terminal domain"/>
    <property type="match status" value="1"/>
</dbReference>
<dbReference type="Gene3D" id="3.40.50.150">
    <property type="entry name" value="Vaccinia Virus protein VP39"/>
    <property type="match status" value="1"/>
</dbReference>
<dbReference type="HAMAP" id="MF_02125">
    <property type="entry name" value="L3_methyltr_PrmB"/>
    <property type="match status" value="1"/>
</dbReference>
<dbReference type="InterPro" id="IPR002052">
    <property type="entry name" value="DNA_methylase_N6_adenine_CS"/>
</dbReference>
<dbReference type="InterPro" id="IPR004556">
    <property type="entry name" value="HemK-like"/>
</dbReference>
<dbReference type="InterPro" id="IPR017127">
    <property type="entry name" value="Ribosome_uL3_MTase"/>
</dbReference>
<dbReference type="InterPro" id="IPR029063">
    <property type="entry name" value="SAM-dependent_MTases_sf"/>
</dbReference>
<dbReference type="InterPro" id="IPR007848">
    <property type="entry name" value="Small_mtfrase_dom"/>
</dbReference>
<dbReference type="NCBIfam" id="TIGR00536">
    <property type="entry name" value="hemK_fam"/>
    <property type="match status" value="1"/>
</dbReference>
<dbReference type="NCBIfam" id="TIGR03533">
    <property type="entry name" value="L3_gln_methyl"/>
    <property type="match status" value="1"/>
</dbReference>
<dbReference type="PANTHER" id="PTHR47806">
    <property type="entry name" value="50S RIBOSOMAL PROTEIN L3 GLUTAMINE METHYLTRANSFERASE"/>
    <property type="match status" value="1"/>
</dbReference>
<dbReference type="PANTHER" id="PTHR47806:SF1">
    <property type="entry name" value="RIBOSOMAL PROTEIN UL3 GLUTAMINE METHYLTRANSFERASE"/>
    <property type="match status" value="1"/>
</dbReference>
<dbReference type="Pfam" id="PF05175">
    <property type="entry name" value="MTS"/>
    <property type="match status" value="1"/>
</dbReference>
<dbReference type="PIRSF" id="PIRSF037167">
    <property type="entry name" value="Mtase_YfcB_prd"/>
    <property type="match status" value="1"/>
</dbReference>
<dbReference type="SUPFAM" id="SSF53335">
    <property type="entry name" value="S-adenosyl-L-methionine-dependent methyltransferases"/>
    <property type="match status" value="1"/>
</dbReference>
<feature type="chain" id="PRO_0000088007" description="Ribosomal protein uL3 glutamine methyltransferase">
    <location>
        <begin position="1"/>
        <end position="303"/>
    </location>
</feature>